<sequence>MNRTFSLRRKVKKSEISTPSNFEHRIHAGFDARSGTYTGLPKQWQALLGPPRSISRPKPMVDPSCITPVDVAELKTVIRGPSSSFRYNSPLPFGMTNSPMPSVARSNSLRISATASPVVNVSSARHSFRPTLPPVSQRGYPFNDPSYAPLPLRNQKPPMSTTFGVEKPHQYQQIITIVAPSRTTTPQLQPKSPSTPQAMRQQPKCTEGVSDEEFRNALKFVVDGTDPRSDLTDYKQIGEGSTGVVEAAYKISTKQIVAVKRMNLRKQQRRELLFNEVSILRQYQHPNIVRFFSSHLVDDELWVVMEFMEGGSLTDIVTATRMTEPQIATISRQVLGALDFLHARKVIHRDIKSDSILLKRDGTVKLTDFGFCGQLSEEVPRRRSLVGTPYWTAAEVIAREPYDTRADIWSFGIMLIEMVEGEPPFFNDQPFQAMKRIRDEHEARFSRHAKVSVELSELLSHCIVKDVNKRWPAKDLLRHPFFAKAQHSSSIAPLLLQLQGNTINGNNPPTHHHSSQITTVIQ</sequence>
<protein>
    <recommendedName>
        <fullName evidence="8">Serine/threonine-protein kinase pak-2</fullName>
        <ecNumber evidence="1">2.7.11.1</ecNumber>
    </recommendedName>
    <alternativeName>
        <fullName evidence="7">p21-activated kinase 2</fullName>
    </alternativeName>
</protein>
<feature type="chain" id="PRO_0000433490" description="Serine/threonine-protein kinase pak-2" evidence="8">
    <location>
        <begin position="1"/>
        <end position="522"/>
    </location>
</feature>
<feature type="domain" description="CRIB" evidence="2">
    <location>
        <begin position="16"/>
        <end position="29"/>
    </location>
</feature>
<feature type="domain" description="Protein kinase" evidence="3">
    <location>
        <begin position="231"/>
        <end position="482"/>
    </location>
</feature>
<feature type="region of interest" description="Disordered" evidence="4">
    <location>
        <begin position="183"/>
        <end position="208"/>
    </location>
</feature>
<feature type="compositionally biased region" description="Polar residues" evidence="4">
    <location>
        <begin position="183"/>
        <end position="204"/>
    </location>
</feature>
<feature type="active site" description="Proton acceptor" evidence="3">
    <location>
        <position position="350"/>
    </location>
</feature>
<feature type="binding site" evidence="3">
    <location>
        <begin position="237"/>
        <end position="245"/>
    </location>
    <ligand>
        <name>ATP</name>
        <dbReference type="ChEBI" id="CHEBI:30616"/>
    </ligand>
</feature>
<feature type="binding site" evidence="3">
    <location>
        <position position="260"/>
    </location>
    <ligand>
        <name>ATP</name>
        <dbReference type="ChEBI" id="CHEBI:30616"/>
    </ligand>
</feature>
<feature type="splice variant" id="VSP_057792" description="In isoform b." evidence="8">
    <location>
        <begin position="84"/>
        <end position="85"/>
    </location>
</feature>
<dbReference type="EC" id="2.7.11.1" evidence="1"/>
<dbReference type="EMBL" id="DQ523831">
    <property type="protein sequence ID" value="ABF71876.1"/>
    <property type="molecule type" value="mRNA"/>
</dbReference>
<dbReference type="EMBL" id="BX284605">
    <property type="protein sequence ID" value="CAA98429.2"/>
    <property type="molecule type" value="Genomic_DNA"/>
</dbReference>
<dbReference type="EMBL" id="BX284605">
    <property type="protein sequence ID" value="CAA98433.2"/>
    <property type="molecule type" value="Genomic_DNA"/>
</dbReference>
<dbReference type="PIR" id="T19952">
    <property type="entry name" value="T19952"/>
</dbReference>
<dbReference type="PIR" id="T19956">
    <property type="entry name" value="T19956"/>
</dbReference>
<dbReference type="RefSeq" id="NP_505809.2">
    <molecule id="G5EFU0-1"/>
    <property type="nucleotide sequence ID" value="NM_073408.6"/>
</dbReference>
<dbReference type="RefSeq" id="NP_505810.2">
    <molecule id="G5EFU0-2"/>
    <property type="nucleotide sequence ID" value="NM_073409.7"/>
</dbReference>
<dbReference type="SMR" id="G5EFU0"/>
<dbReference type="FunCoup" id="G5EFU0">
    <property type="interactions" value="2501"/>
</dbReference>
<dbReference type="STRING" id="6239.C45B11.1a.1"/>
<dbReference type="PaxDb" id="6239-C45B11.1a"/>
<dbReference type="PeptideAtlas" id="G5EFU0"/>
<dbReference type="EnsemblMetazoa" id="C45B11.1a.1">
    <molecule id="G5EFU0-1"/>
    <property type="protein sequence ID" value="C45B11.1a.1"/>
    <property type="gene ID" value="WBGene00006443"/>
</dbReference>
<dbReference type="EnsemblMetazoa" id="C45B11.1b.1">
    <molecule id="G5EFU0-2"/>
    <property type="protein sequence ID" value="C45B11.1b.1"/>
    <property type="gene ID" value="WBGene00006443"/>
</dbReference>
<dbReference type="GeneID" id="179527"/>
<dbReference type="KEGG" id="cel:CELE_C45B11.1"/>
<dbReference type="UCSC" id="C45B11.1b">
    <property type="organism name" value="c. elegans"/>
</dbReference>
<dbReference type="AGR" id="WB:WBGene00006443"/>
<dbReference type="CTD" id="179527"/>
<dbReference type="WormBase" id="C45B11.1a">
    <molecule id="G5EFU0-1"/>
    <property type="protein sequence ID" value="CE40445"/>
    <property type="gene ID" value="WBGene00006443"/>
    <property type="gene designation" value="pak-2"/>
</dbReference>
<dbReference type="WormBase" id="C45B11.1b">
    <molecule id="G5EFU0-2"/>
    <property type="protein sequence ID" value="CE40446"/>
    <property type="gene ID" value="WBGene00006443"/>
    <property type="gene designation" value="pak-2"/>
</dbReference>
<dbReference type="eggNOG" id="KOG0578">
    <property type="taxonomic scope" value="Eukaryota"/>
</dbReference>
<dbReference type="GeneTree" id="ENSGT00940000169130"/>
<dbReference type="InParanoid" id="G5EFU0"/>
<dbReference type="OMA" id="YPMYPAS"/>
<dbReference type="OrthoDB" id="1022360at2759"/>
<dbReference type="PhylomeDB" id="G5EFU0"/>
<dbReference type="Reactome" id="R-CEL-9013149">
    <property type="pathway name" value="RAC1 GTPase cycle"/>
</dbReference>
<dbReference type="Reactome" id="R-CEL-9013404">
    <property type="pathway name" value="RAC2 GTPase cycle"/>
</dbReference>
<dbReference type="Reactome" id="R-CEL-9013405">
    <property type="pathway name" value="RHOD GTPase cycle"/>
</dbReference>
<dbReference type="Reactome" id="R-CEL-9013406">
    <property type="pathway name" value="RHOQ GTPase cycle"/>
</dbReference>
<dbReference type="Reactome" id="R-CEL-9013407">
    <property type="pathway name" value="RHOH GTPase cycle"/>
</dbReference>
<dbReference type="Reactome" id="R-CEL-9013408">
    <property type="pathway name" value="RHOG GTPase cycle"/>
</dbReference>
<dbReference type="Reactome" id="R-CEL-9013420">
    <property type="pathway name" value="RHOU GTPase cycle"/>
</dbReference>
<dbReference type="Reactome" id="R-CEL-9013423">
    <property type="pathway name" value="RAC3 GTPase cycle"/>
</dbReference>
<dbReference type="Reactome" id="R-CEL-9013424">
    <property type="pathway name" value="RHOV GTPase cycle"/>
</dbReference>
<dbReference type="PRO" id="PR:G5EFU0"/>
<dbReference type="Proteomes" id="UP000001940">
    <property type="component" value="Chromosome V"/>
</dbReference>
<dbReference type="Bgee" id="WBGene00006443">
    <property type="expression patterns" value="Expressed in germ line (C elegans) and 4 other cell types or tissues"/>
</dbReference>
<dbReference type="GO" id="GO:0005737">
    <property type="term" value="C:cytoplasm"/>
    <property type="evidence" value="ECO:0000318"/>
    <property type="project" value="GO_Central"/>
</dbReference>
<dbReference type="GO" id="GO:0005524">
    <property type="term" value="F:ATP binding"/>
    <property type="evidence" value="ECO:0007669"/>
    <property type="project" value="UniProtKB-KW"/>
</dbReference>
<dbReference type="GO" id="GO:0046872">
    <property type="term" value="F:metal ion binding"/>
    <property type="evidence" value="ECO:0007669"/>
    <property type="project" value="UniProtKB-KW"/>
</dbReference>
<dbReference type="GO" id="GO:0106310">
    <property type="term" value="F:protein serine kinase activity"/>
    <property type="evidence" value="ECO:0007669"/>
    <property type="project" value="RHEA"/>
</dbReference>
<dbReference type="GO" id="GO:0004674">
    <property type="term" value="F:protein serine/threonine kinase activity"/>
    <property type="evidence" value="ECO:0000318"/>
    <property type="project" value="GO_Central"/>
</dbReference>
<dbReference type="GO" id="GO:0009267">
    <property type="term" value="P:cellular response to starvation"/>
    <property type="evidence" value="ECO:0000318"/>
    <property type="project" value="GO_Central"/>
</dbReference>
<dbReference type="GO" id="GO:0035556">
    <property type="term" value="P:intracellular signal transduction"/>
    <property type="evidence" value="ECO:0000318"/>
    <property type="project" value="GO_Central"/>
</dbReference>
<dbReference type="GO" id="GO:0002119">
    <property type="term" value="P:nematode larval development"/>
    <property type="evidence" value="ECO:0000316"/>
    <property type="project" value="UniProtKB"/>
</dbReference>
<dbReference type="GO" id="GO:0043408">
    <property type="term" value="P:regulation of MAPK cascade"/>
    <property type="evidence" value="ECO:0000318"/>
    <property type="project" value="GO_Central"/>
</dbReference>
<dbReference type="CDD" id="cd01093">
    <property type="entry name" value="CRIB_PAK_like"/>
    <property type="match status" value="1"/>
</dbReference>
<dbReference type="FunFam" id="1.10.510.10:FF:000768">
    <property type="entry name" value="Non-specific serine/threonine protein kinase"/>
    <property type="match status" value="1"/>
</dbReference>
<dbReference type="FunFam" id="3.30.200.20:FF:000705">
    <property type="entry name" value="Non-specific serine/threonine protein kinase"/>
    <property type="match status" value="1"/>
</dbReference>
<dbReference type="Gene3D" id="3.90.810.10">
    <property type="entry name" value="CRIB domain"/>
    <property type="match status" value="1"/>
</dbReference>
<dbReference type="Gene3D" id="3.30.200.20">
    <property type="entry name" value="Phosphorylase Kinase, domain 1"/>
    <property type="match status" value="1"/>
</dbReference>
<dbReference type="Gene3D" id="1.10.510.10">
    <property type="entry name" value="Transferase(Phosphotransferase) domain 1"/>
    <property type="match status" value="1"/>
</dbReference>
<dbReference type="InterPro" id="IPR000095">
    <property type="entry name" value="CRIB_dom"/>
</dbReference>
<dbReference type="InterPro" id="IPR036936">
    <property type="entry name" value="CRIB_dom_sf"/>
</dbReference>
<dbReference type="InterPro" id="IPR011009">
    <property type="entry name" value="Kinase-like_dom_sf"/>
</dbReference>
<dbReference type="InterPro" id="IPR051931">
    <property type="entry name" value="PAK3-like"/>
</dbReference>
<dbReference type="InterPro" id="IPR033923">
    <property type="entry name" value="PAK_BD"/>
</dbReference>
<dbReference type="InterPro" id="IPR000719">
    <property type="entry name" value="Prot_kinase_dom"/>
</dbReference>
<dbReference type="InterPro" id="IPR017441">
    <property type="entry name" value="Protein_kinase_ATP_BS"/>
</dbReference>
<dbReference type="PANTHER" id="PTHR45832:SF8">
    <property type="entry name" value="PROTEIN KINASE DOMAIN-CONTAINING PROTEIN"/>
    <property type="match status" value="1"/>
</dbReference>
<dbReference type="PANTHER" id="PTHR45832">
    <property type="entry name" value="SERINE/THREONINE-PROTEIN KINASE SAMKA-RELATED-RELATED"/>
    <property type="match status" value="1"/>
</dbReference>
<dbReference type="Pfam" id="PF00786">
    <property type="entry name" value="PBD"/>
    <property type="match status" value="1"/>
</dbReference>
<dbReference type="Pfam" id="PF00069">
    <property type="entry name" value="Pkinase"/>
    <property type="match status" value="1"/>
</dbReference>
<dbReference type="SMART" id="SM00285">
    <property type="entry name" value="PBD"/>
    <property type="match status" value="1"/>
</dbReference>
<dbReference type="SUPFAM" id="SSF56112">
    <property type="entry name" value="Protein kinase-like (PK-like)"/>
    <property type="match status" value="1"/>
</dbReference>
<dbReference type="PROSITE" id="PS50108">
    <property type="entry name" value="CRIB"/>
    <property type="match status" value="1"/>
</dbReference>
<dbReference type="PROSITE" id="PS00107">
    <property type="entry name" value="PROTEIN_KINASE_ATP"/>
    <property type="match status" value="1"/>
</dbReference>
<dbReference type="PROSITE" id="PS50011">
    <property type="entry name" value="PROTEIN_KINASE_DOM"/>
    <property type="match status" value="1"/>
</dbReference>
<name>PK2_CAEEL</name>
<evidence type="ECO:0000250" key="1">
    <source>
        <dbReference type="UniProtKB" id="Q17850"/>
    </source>
</evidence>
<evidence type="ECO:0000255" key="2">
    <source>
        <dbReference type="PROSITE-ProRule" id="PRU00057"/>
    </source>
</evidence>
<evidence type="ECO:0000255" key="3">
    <source>
        <dbReference type="PROSITE-ProRule" id="PRU00159"/>
    </source>
</evidence>
<evidence type="ECO:0000256" key="4">
    <source>
        <dbReference type="SAM" id="MobiDB-lite"/>
    </source>
</evidence>
<evidence type="ECO:0000269" key="5">
    <source>
    </source>
</evidence>
<evidence type="ECO:0000269" key="6">
    <source>
    </source>
</evidence>
<evidence type="ECO:0000303" key="7">
    <source>
    </source>
</evidence>
<evidence type="ECO:0000305" key="8"/>
<evidence type="ECO:0000312" key="9">
    <source>
        <dbReference type="EMBL" id="ABF71876.1"/>
    </source>
</evidence>
<evidence type="ECO:0000312" key="10">
    <source>
        <dbReference type="Proteomes" id="UP000001940"/>
    </source>
</evidence>
<evidence type="ECO:0000312" key="11">
    <source>
        <dbReference type="WormBase" id="C45B11.1a"/>
    </source>
</evidence>
<evidence type="ECO:0000312" key="12">
    <source>
        <dbReference type="WormBase" id="C45B11.1b"/>
    </source>
</evidence>
<gene>
    <name evidence="11" type="primary">pak-2</name>
    <name evidence="11" type="ORF">C45B11.1</name>
</gene>
<proteinExistence type="evidence at transcript level"/>
<comment type="function">
    <text evidence="5 6">Serine/threonine-protein kinase which plays a redundant role with pak-1 in embryogenesis but, in contrast to pak-1, is not involved in commissural axon guidance of ventral cord motoneurons or in distal tip cell (DTC) migration.</text>
</comment>
<comment type="catalytic activity">
    <reaction evidence="1">
        <text>L-seryl-[protein] + ATP = O-phospho-L-seryl-[protein] + ADP + H(+)</text>
        <dbReference type="Rhea" id="RHEA:17989"/>
        <dbReference type="Rhea" id="RHEA-COMP:9863"/>
        <dbReference type="Rhea" id="RHEA-COMP:11604"/>
        <dbReference type="ChEBI" id="CHEBI:15378"/>
        <dbReference type="ChEBI" id="CHEBI:29999"/>
        <dbReference type="ChEBI" id="CHEBI:30616"/>
        <dbReference type="ChEBI" id="CHEBI:83421"/>
        <dbReference type="ChEBI" id="CHEBI:456216"/>
        <dbReference type="EC" id="2.7.11.1"/>
    </reaction>
</comment>
<comment type="catalytic activity">
    <reaction evidence="1">
        <text>L-threonyl-[protein] + ATP = O-phospho-L-threonyl-[protein] + ADP + H(+)</text>
        <dbReference type="Rhea" id="RHEA:46608"/>
        <dbReference type="Rhea" id="RHEA-COMP:11060"/>
        <dbReference type="Rhea" id="RHEA-COMP:11605"/>
        <dbReference type="ChEBI" id="CHEBI:15378"/>
        <dbReference type="ChEBI" id="CHEBI:30013"/>
        <dbReference type="ChEBI" id="CHEBI:30616"/>
        <dbReference type="ChEBI" id="CHEBI:61977"/>
        <dbReference type="ChEBI" id="CHEBI:456216"/>
        <dbReference type="EC" id="2.7.11.1"/>
    </reaction>
</comment>
<comment type="cofactor">
    <cofactor evidence="1">
        <name>Mg(2+)</name>
        <dbReference type="ChEBI" id="CHEBI:18420"/>
    </cofactor>
    <cofactor evidence="1">
        <name>Mn(2+)</name>
        <dbReference type="ChEBI" id="CHEBI:29035"/>
    </cofactor>
    <text evidence="1">Divalent cations such as magnesium or manganese.</text>
</comment>
<comment type="alternative products">
    <event type="alternative splicing"/>
    <isoform>
        <id>G5EFU0-1</id>
        <name evidence="11">a</name>
        <sequence type="displayed"/>
    </isoform>
    <isoform>
        <id>G5EFU0-2</id>
        <name evidence="12">b</name>
        <sequence type="described" ref="VSP_057792"/>
    </isoform>
</comment>
<comment type="tissue specificity">
    <text evidence="5">Expressed in pharynx, vulva and spermatheca. Unlike other p21-activated kinases, expression is not detected in neurons.</text>
</comment>
<comment type="disruption phenotype">
    <text evidence="5 6">Low level of embryonic lethality (&lt; 15 percent) which is suppressed by simultaneous RNAi-mediated knockdown of max-2 (PubMed:19797046). In pak-1 and pak-2 double mutants, defects in embryogenesis and L1 stage lethality. The few animals reaching adulthood are smaller but have normal ventral cord commissural motoneuron axonal guidance and are relatively coordinated (PubMed:17050621, PubMed:19797046).</text>
</comment>
<comment type="similarity">
    <text evidence="8">Belongs to the protein kinase superfamily. STE Ser/Thr protein kinase family. STE20 subfamily.</text>
</comment>
<comment type="caution">
    <text evidence="8">Despite the gene name, this is not the ortholog of vertebrate PAK2.</text>
</comment>
<accession>G5EFU0</accession>
<accession>Q9U3M1</accession>
<organism evidence="10">
    <name type="scientific">Caenorhabditis elegans</name>
    <dbReference type="NCBI Taxonomy" id="6239"/>
    <lineage>
        <taxon>Eukaryota</taxon>
        <taxon>Metazoa</taxon>
        <taxon>Ecdysozoa</taxon>
        <taxon>Nematoda</taxon>
        <taxon>Chromadorea</taxon>
        <taxon>Rhabditida</taxon>
        <taxon>Rhabditina</taxon>
        <taxon>Rhabditomorpha</taxon>
        <taxon>Rhabditoidea</taxon>
        <taxon>Rhabditidae</taxon>
        <taxon>Peloderinae</taxon>
        <taxon>Caenorhabditis</taxon>
    </lineage>
</organism>
<reference evidence="9" key="1">
    <citation type="journal article" date="2006" name="Development">
        <title>The Caenorhabditis elegans P21-activated kinases are differentially required for UNC-6/netrin-mediated commissural motor axon guidance.</title>
        <authorList>
            <person name="Lucanic M."/>
            <person name="Kiley M."/>
            <person name="Ashcroft N."/>
            <person name="L'Etoile N."/>
            <person name="Cheng H.J."/>
        </authorList>
    </citation>
    <scope>NUCLEOTIDE SEQUENCE [MRNA] (ISOFORM A)</scope>
    <scope>FUNCTION</scope>
    <scope>TISSUE SPECIFICITY</scope>
    <scope>DISRUPTION PHENOTYPE</scope>
</reference>
<reference evidence="10" key="2">
    <citation type="journal article" date="1998" name="Science">
        <title>Genome sequence of the nematode C. elegans: a platform for investigating biology.</title>
        <authorList>
            <consortium name="The C. elegans sequencing consortium"/>
        </authorList>
    </citation>
    <scope>NUCLEOTIDE SEQUENCE [LARGE SCALE GENOMIC DNA]</scope>
    <source>
        <strain evidence="10">Bristol N2</strain>
    </source>
</reference>
<reference evidence="8" key="3">
    <citation type="journal article" date="2009" name="Genetics">
        <title>Pharmacogenetic analysis reveals a post-developmental role for Rac GTPases in Caenorhabditis elegans GABAergic neurotransmission.</title>
        <authorList>
            <person name="Locke C.J."/>
            <person name="Kautu B.B."/>
            <person name="Berry K.P."/>
            <person name="Lee S.K."/>
            <person name="Caldwell K.A."/>
            <person name="Caldwell G.A."/>
        </authorList>
    </citation>
    <scope>FUNCTION</scope>
    <scope>DISRUPTION PHENOTYPE</scope>
</reference>
<keyword id="KW-0025">Alternative splicing</keyword>
<keyword id="KW-0067">ATP-binding</keyword>
<keyword id="KW-0418">Kinase</keyword>
<keyword id="KW-0460">Magnesium</keyword>
<keyword id="KW-0464">Manganese</keyword>
<keyword id="KW-0479">Metal-binding</keyword>
<keyword id="KW-0547">Nucleotide-binding</keyword>
<keyword id="KW-1185">Reference proteome</keyword>
<keyword id="KW-0723">Serine/threonine-protein kinase</keyword>
<keyword id="KW-0808">Transferase</keyword>